<organism>
    <name type="scientific">Pseudomonas putida (strain GB-1)</name>
    <dbReference type="NCBI Taxonomy" id="76869"/>
    <lineage>
        <taxon>Bacteria</taxon>
        <taxon>Pseudomonadati</taxon>
        <taxon>Pseudomonadota</taxon>
        <taxon>Gammaproteobacteria</taxon>
        <taxon>Pseudomonadales</taxon>
        <taxon>Pseudomonadaceae</taxon>
        <taxon>Pseudomonas</taxon>
    </lineage>
</organism>
<accession>B0KLX5</accession>
<gene>
    <name evidence="1" type="primary">infA</name>
    <name type="ordered locus">PputGB1_3612</name>
</gene>
<keyword id="KW-0963">Cytoplasm</keyword>
<keyword id="KW-0396">Initiation factor</keyword>
<keyword id="KW-0648">Protein biosynthesis</keyword>
<keyword id="KW-0694">RNA-binding</keyword>
<keyword id="KW-0699">rRNA-binding</keyword>
<dbReference type="EMBL" id="CP000926">
    <property type="protein sequence ID" value="ABY99503.1"/>
    <property type="molecule type" value="Genomic_DNA"/>
</dbReference>
<dbReference type="RefSeq" id="WP_002553999.1">
    <property type="nucleotide sequence ID" value="NC_010322.1"/>
</dbReference>
<dbReference type="SMR" id="B0KLX5"/>
<dbReference type="GeneID" id="98638452"/>
<dbReference type="KEGG" id="ppg:PputGB1_3612"/>
<dbReference type="eggNOG" id="COG0361">
    <property type="taxonomic scope" value="Bacteria"/>
</dbReference>
<dbReference type="HOGENOM" id="CLU_151267_1_0_6"/>
<dbReference type="Proteomes" id="UP000002157">
    <property type="component" value="Chromosome"/>
</dbReference>
<dbReference type="GO" id="GO:0005829">
    <property type="term" value="C:cytosol"/>
    <property type="evidence" value="ECO:0007669"/>
    <property type="project" value="TreeGrafter"/>
</dbReference>
<dbReference type="GO" id="GO:0043022">
    <property type="term" value="F:ribosome binding"/>
    <property type="evidence" value="ECO:0007669"/>
    <property type="project" value="UniProtKB-UniRule"/>
</dbReference>
<dbReference type="GO" id="GO:0019843">
    <property type="term" value="F:rRNA binding"/>
    <property type="evidence" value="ECO:0007669"/>
    <property type="project" value="UniProtKB-UniRule"/>
</dbReference>
<dbReference type="GO" id="GO:0003743">
    <property type="term" value="F:translation initiation factor activity"/>
    <property type="evidence" value="ECO:0007669"/>
    <property type="project" value="UniProtKB-UniRule"/>
</dbReference>
<dbReference type="CDD" id="cd04451">
    <property type="entry name" value="S1_IF1"/>
    <property type="match status" value="1"/>
</dbReference>
<dbReference type="FunFam" id="2.40.50.140:FF:000002">
    <property type="entry name" value="Translation initiation factor IF-1"/>
    <property type="match status" value="1"/>
</dbReference>
<dbReference type="Gene3D" id="2.40.50.140">
    <property type="entry name" value="Nucleic acid-binding proteins"/>
    <property type="match status" value="1"/>
</dbReference>
<dbReference type="HAMAP" id="MF_00075">
    <property type="entry name" value="IF_1"/>
    <property type="match status" value="1"/>
</dbReference>
<dbReference type="InterPro" id="IPR012340">
    <property type="entry name" value="NA-bd_OB-fold"/>
</dbReference>
<dbReference type="InterPro" id="IPR006196">
    <property type="entry name" value="RNA-binding_domain_S1_IF1"/>
</dbReference>
<dbReference type="InterPro" id="IPR003029">
    <property type="entry name" value="S1_domain"/>
</dbReference>
<dbReference type="InterPro" id="IPR004368">
    <property type="entry name" value="TIF_IF1"/>
</dbReference>
<dbReference type="NCBIfam" id="TIGR00008">
    <property type="entry name" value="infA"/>
    <property type="match status" value="1"/>
</dbReference>
<dbReference type="PANTHER" id="PTHR33370">
    <property type="entry name" value="TRANSLATION INITIATION FACTOR IF-1, CHLOROPLASTIC"/>
    <property type="match status" value="1"/>
</dbReference>
<dbReference type="PANTHER" id="PTHR33370:SF1">
    <property type="entry name" value="TRANSLATION INITIATION FACTOR IF-1, CHLOROPLASTIC"/>
    <property type="match status" value="1"/>
</dbReference>
<dbReference type="Pfam" id="PF01176">
    <property type="entry name" value="eIF-1a"/>
    <property type="match status" value="1"/>
</dbReference>
<dbReference type="SMART" id="SM00316">
    <property type="entry name" value="S1"/>
    <property type="match status" value="1"/>
</dbReference>
<dbReference type="SUPFAM" id="SSF50249">
    <property type="entry name" value="Nucleic acid-binding proteins"/>
    <property type="match status" value="1"/>
</dbReference>
<dbReference type="PROSITE" id="PS50832">
    <property type="entry name" value="S1_IF1_TYPE"/>
    <property type="match status" value="1"/>
</dbReference>
<feature type="chain" id="PRO_0000338892" description="Translation initiation factor IF-1">
    <location>
        <begin position="1"/>
        <end position="72"/>
    </location>
</feature>
<feature type="domain" description="S1-like" evidence="1">
    <location>
        <begin position="1"/>
        <end position="72"/>
    </location>
</feature>
<name>IF1_PSEPG</name>
<proteinExistence type="inferred from homology"/>
<reference key="1">
    <citation type="submission" date="2008-01" db="EMBL/GenBank/DDBJ databases">
        <title>Complete sequence of Pseudomonas putida GB-1.</title>
        <authorList>
            <consortium name="US DOE Joint Genome Institute"/>
            <person name="Copeland A."/>
            <person name="Lucas S."/>
            <person name="Lapidus A."/>
            <person name="Barry K."/>
            <person name="Glavina del Rio T."/>
            <person name="Dalin E."/>
            <person name="Tice H."/>
            <person name="Pitluck S."/>
            <person name="Bruce D."/>
            <person name="Goodwin L."/>
            <person name="Chertkov O."/>
            <person name="Brettin T."/>
            <person name="Detter J.C."/>
            <person name="Han C."/>
            <person name="Kuske C.R."/>
            <person name="Schmutz J."/>
            <person name="Larimer F."/>
            <person name="Land M."/>
            <person name="Hauser L."/>
            <person name="Kyrpides N."/>
            <person name="Kim E."/>
            <person name="McCarthy J.K."/>
            <person name="Richardson P."/>
        </authorList>
    </citation>
    <scope>NUCLEOTIDE SEQUENCE [LARGE SCALE GENOMIC DNA]</scope>
    <source>
        <strain>GB-1</strain>
    </source>
</reference>
<sequence>MSKEDSFEMEGTVVDTLPNTMFRVELENGHVVTAHISGKMRKNYIRILTGDKVRVELTPYDLSKGRITYRAR</sequence>
<protein>
    <recommendedName>
        <fullName evidence="1">Translation initiation factor IF-1</fullName>
    </recommendedName>
</protein>
<comment type="function">
    <text evidence="1">One of the essential components for the initiation of protein synthesis. Stabilizes the binding of IF-2 and IF-3 on the 30S subunit to which N-formylmethionyl-tRNA(fMet) subsequently binds. Helps modulate mRNA selection, yielding the 30S pre-initiation complex (PIC). Upon addition of the 50S ribosomal subunit IF-1, IF-2 and IF-3 are released leaving the mature 70S translation initiation complex.</text>
</comment>
<comment type="subunit">
    <text evidence="1">Component of the 30S ribosomal translation pre-initiation complex which assembles on the 30S ribosome in the order IF-2 and IF-3, IF-1 and N-formylmethionyl-tRNA(fMet); mRNA recruitment can occur at any time during PIC assembly.</text>
</comment>
<comment type="subcellular location">
    <subcellularLocation>
        <location evidence="1">Cytoplasm</location>
    </subcellularLocation>
</comment>
<comment type="similarity">
    <text evidence="1">Belongs to the IF-1 family.</text>
</comment>
<evidence type="ECO:0000255" key="1">
    <source>
        <dbReference type="HAMAP-Rule" id="MF_00075"/>
    </source>
</evidence>